<keyword id="KW-0067">ATP-binding</keyword>
<keyword id="KW-0963">Cytoplasm</keyword>
<keyword id="KW-0347">Helicase</keyword>
<keyword id="KW-0378">Hydrolase</keyword>
<keyword id="KW-0507">mRNA processing</keyword>
<keyword id="KW-0509">mRNA transport</keyword>
<keyword id="KW-0547">Nucleotide-binding</keyword>
<keyword id="KW-1185">Reference proteome</keyword>
<keyword id="KW-0694">RNA-binding</keyword>
<keyword id="KW-0810">Translation regulation</keyword>
<keyword id="KW-0813">Transport</keyword>
<comment type="function">
    <text evidence="1">ATP-dependent RNA helicase involved in mRNA turnover, and more specifically in mRNA decapping by activating the decapping enzyme DCP1. Is involved in G1/S DNA-damage checkpoint recovery, probably through the regulation of the translational status of a subset of mRNAs. May also have a role in translation and mRNA nuclear export (By similarity).</text>
</comment>
<comment type="catalytic activity">
    <reaction>
        <text>ATP + H2O = ADP + phosphate + H(+)</text>
        <dbReference type="Rhea" id="RHEA:13065"/>
        <dbReference type="ChEBI" id="CHEBI:15377"/>
        <dbReference type="ChEBI" id="CHEBI:15378"/>
        <dbReference type="ChEBI" id="CHEBI:30616"/>
        <dbReference type="ChEBI" id="CHEBI:43474"/>
        <dbReference type="ChEBI" id="CHEBI:456216"/>
        <dbReference type="EC" id="3.6.4.13"/>
    </reaction>
</comment>
<comment type="subcellular location">
    <subcellularLocation>
        <location evidence="1">Cytoplasm</location>
        <location evidence="1">P-body</location>
    </subcellularLocation>
    <text evidence="1">Is concentrated in several cytoplasmic foci called P bodies (or cytoplasmic processing bodies) which represent sites of mRNA decapping and 5' to 3' exonucleotidic decay.</text>
</comment>
<comment type="domain">
    <text>The Q motif is unique to and characteristic of the DEAD box family of RNA helicases and controls ATP binding and hydrolysis.</text>
</comment>
<comment type="similarity">
    <text evidence="5">Belongs to the DEAD box helicase family. DDX6/DHH1 subfamily.</text>
</comment>
<gene>
    <name type="primary">DHH1</name>
    <name type="ORF">Kpol_2001p67</name>
</gene>
<name>DHH1_VANPO</name>
<feature type="chain" id="PRO_0000310197" description="ATP-dependent RNA helicase DHH1">
    <location>
        <begin position="1"/>
        <end position="484"/>
    </location>
</feature>
<feature type="domain" description="Helicase ATP-binding" evidence="2">
    <location>
        <begin position="65"/>
        <end position="235"/>
    </location>
</feature>
<feature type="domain" description="Helicase C-terminal" evidence="3">
    <location>
        <begin position="245"/>
        <end position="405"/>
    </location>
</feature>
<feature type="region of interest" description="Disordered" evidence="4">
    <location>
        <begin position="1"/>
        <end position="27"/>
    </location>
</feature>
<feature type="region of interest" description="Disordered" evidence="4">
    <location>
        <begin position="430"/>
        <end position="484"/>
    </location>
</feature>
<feature type="short sequence motif" description="Q motif">
    <location>
        <begin position="34"/>
        <end position="62"/>
    </location>
</feature>
<feature type="short sequence motif" description="DEAD box">
    <location>
        <begin position="183"/>
        <end position="186"/>
    </location>
</feature>
<feature type="compositionally biased region" description="Basic and acidic residues" evidence="4">
    <location>
        <begin position="8"/>
        <end position="25"/>
    </location>
</feature>
<feature type="compositionally biased region" description="Low complexity" evidence="4">
    <location>
        <begin position="442"/>
        <end position="484"/>
    </location>
</feature>
<feature type="binding site" evidence="2">
    <location>
        <begin position="78"/>
        <end position="85"/>
    </location>
    <ligand>
        <name>ATP</name>
        <dbReference type="ChEBI" id="CHEBI:30616"/>
    </ligand>
</feature>
<dbReference type="EC" id="3.6.4.13"/>
<dbReference type="EMBL" id="DS480388">
    <property type="protein sequence ID" value="EDO18560.1"/>
    <property type="molecule type" value="Genomic_DNA"/>
</dbReference>
<dbReference type="RefSeq" id="XP_001646418.1">
    <property type="nucleotide sequence ID" value="XM_001646368.1"/>
</dbReference>
<dbReference type="SMR" id="A7TGU7"/>
<dbReference type="FunCoup" id="A7TGU7">
    <property type="interactions" value="1434"/>
</dbReference>
<dbReference type="STRING" id="436907.A7TGU7"/>
<dbReference type="GeneID" id="5546858"/>
<dbReference type="KEGG" id="vpo:Kpol_2001p67"/>
<dbReference type="eggNOG" id="KOG0326">
    <property type="taxonomic scope" value="Eukaryota"/>
</dbReference>
<dbReference type="HOGENOM" id="CLU_003041_30_0_1"/>
<dbReference type="InParanoid" id="A7TGU7"/>
<dbReference type="OMA" id="TYEDRHT"/>
<dbReference type="OrthoDB" id="10265785at2759"/>
<dbReference type="PhylomeDB" id="A7TGU7"/>
<dbReference type="Proteomes" id="UP000000267">
    <property type="component" value="Unassembled WGS sequence"/>
</dbReference>
<dbReference type="GO" id="GO:0098562">
    <property type="term" value="C:cytoplasmic side of membrane"/>
    <property type="evidence" value="ECO:0007669"/>
    <property type="project" value="EnsemblFungi"/>
</dbReference>
<dbReference type="GO" id="GO:0010494">
    <property type="term" value="C:cytoplasmic stress granule"/>
    <property type="evidence" value="ECO:0007669"/>
    <property type="project" value="EnsemblFungi"/>
</dbReference>
<dbReference type="GO" id="GO:0000932">
    <property type="term" value="C:P-body"/>
    <property type="evidence" value="ECO:0007669"/>
    <property type="project" value="UniProtKB-SubCell"/>
</dbReference>
<dbReference type="GO" id="GO:0005524">
    <property type="term" value="F:ATP binding"/>
    <property type="evidence" value="ECO:0007669"/>
    <property type="project" value="UniProtKB-KW"/>
</dbReference>
<dbReference type="GO" id="GO:0016887">
    <property type="term" value="F:ATP hydrolysis activity"/>
    <property type="evidence" value="ECO:0007669"/>
    <property type="project" value="EnsemblFungi"/>
</dbReference>
<dbReference type="GO" id="GO:0003682">
    <property type="term" value="F:chromatin binding"/>
    <property type="evidence" value="ECO:0007669"/>
    <property type="project" value="EnsemblFungi"/>
</dbReference>
<dbReference type="GO" id="GO:0003729">
    <property type="term" value="F:mRNA binding"/>
    <property type="evidence" value="ECO:0007669"/>
    <property type="project" value="EnsemblFungi"/>
</dbReference>
<dbReference type="GO" id="GO:0003724">
    <property type="term" value="F:RNA helicase activity"/>
    <property type="evidence" value="ECO:0007669"/>
    <property type="project" value="UniProtKB-EC"/>
</dbReference>
<dbReference type="GO" id="GO:0042149">
    <property type="term" value="P:cellular response to glucose starvation"/>
    <property type="evidence" value="ECO:0007669"/>
    <property type="project" value="EnsemblFungi"/>
</dbReference>
<dbReference type="GO" id="GO:0006995">
    <property type="term" value="P:cellular response to nitrogen starvation"/>
    <property type="evidence" value="ECO:0007669"/>
    <property type="project" value="EnsemblFungi"/>
</dbReference>
<dbReference type="GO" id="GO:0000290">
    <property type="term" value="P:deadenylation-dependent decapping of nuclear-transcribed mRNA"/>
    <property type="evidence" value="ECO:0007669"/>
    <property type="project" value="EnsemblFungi"/>
</dbReference>
<dbReference type="GO" id="GO:0036267">
    <property type="term" value="P:invasive filamentous growth"/>
    <property type="evidence" value="ECO:0007669"/>
    <property type="project" value="EnsemblFungi"/>
</dbReference>
<dbReference type="GO" id="GO:0006397">
    <property type="term" value="P:mRNA processing"/>
    <property type="evidence" value="ECO:0007669"/>
    <property type="project" value="UniProtKB-KW"/>
</dbReference>
<dbReference type="GO" id="GO:0051028">
    <property type="term" value="P:mRNA transport"/>
    <property type="evidence" value="ECO:0007669"/>
    <property type="project" value="UniProtKB-KW"/>
</dbReference>
<dbReference type="GO" id="GO:0045900">
    <property type="term" value="P:negative regulation of translational elongation"/>
    <property type="evidence" value="ECO:0007669"/>
    <property type="project" value="EnsemblFungi"/>
</dbReference>
<dbReference type="GO" id="GO:0033962">
    <property type="term" value="P:P-body assembly"/>
    <property type="evidence" value="ECO:0007669"/>
    <property type="project" value="EnsemblFungi"/>
</dbReference>
<dbReference type="GO" id="GO:0045727">
    <property type="term" value="P:positive regulation of translation"/>
    <property type="evidence" value="ECO:0007669"/>
    <property type="project" value="EnsemblFungi"/>
</dbReference>
<dbReference type="GO" id="GO:0007124">
    <property type="term" value="P:pseudohyphal growth"/>
    <property type="evidence" value="ECO:0007669"/>
    <property type="project" value="EnsemblFungi"/>
</dbReference>
<dbReference type="GO" id="GO:0010603">
    <property type="term" value="P:regulation of cytoplasmic mRNA processing body assembly"/>
    <property type="evidence" value="ECO:0007669"/>
    <property type="project" value="EnsemblFungi"/>
</dbReference>
<dbReference type="GO" id="GO:0000749">
    <property type="term" value="P:response to pheromone triggering conjugation with cellular fusion"/>
    <property type="evidence" value="ECO:0007669"/>
    <property type="project" value="EnsemblFungi"/>
</dbReference>
<dbReference type="GO" id="GO:0034063">
    <property type="term" value="P:stress granule assembly"/>
    <property type="evidence" value="ECO:0007669"/>
    <property type="project" value="EnsemblFungi"/>
</dbReference>
<dbReference type="CDD" id="cd17940">
    <property type="entry name" value="DEADc_DDX6"/>
    <property type="match status" value="1"/>
</dbReference>
<dbReference type="CDD" id="cd18787">
    <property type="entry name" value="SF2_C_DEAD"/>
    <property type="match status" value="1"/>
</dbReference>
<dbReference type="FunFam" id="3.40.50.300:FF:000114">
    <property type="entry name" value="ATP-dependent RNA helicase DDX6"/>
    <property type="match status" value="1"/>
</dbReference>
<dbReference type="FunFam" id="3.40.50.300:FF:000364">
    <property type="entry name" value="ATP-dependent RNA helicase DDX6"/>
    <property type="match status" value="1"/>
</dbReference>
<dbReference type="Gene3D" id="3.40.50.300">
    <property type="entry name" value="P-loop containing nucleotide triphosphate hydrolases"/>
    <property type="match status" value="2"/>
</dbReference>
<dbReference type="InterPro" id="IPR011545">
    <property type="entry name" value="DEAD/DEAH_box_helicase_dom"/>
</dbReference>
<dbReference type="InterPro" id="IPR014001">
    <property type="entry name" value="Helicase_ATP-bd"/>
</dbReference>
<dbReference type="InterPro" id="IPR001650">
    <property type="entry name" value="Helicase_C-like"/>
</dbReference>
<dbReference type="InterPro" id="IPR027417">
    <property type="entry name" value="P-loop_NTPase"/>
</dbReference>
<dbReference type="InterPro" id="IPR000629">
    <property type="entry name" value="RNA-helicase_DEAD-box_CS"/>
</dbReference>
<dbReference type="InterPro" id="IPR014014">
    <property type="entry name" value="RNA_helicase_DEAD_Q_motif"/>
</dbReference>
<dbReference type="PANTHER" id="PTHR47960">
    <property type="entry name" value="DEAD-BOX ATP-DEPENDENT RNA HELICASE 50"/>
    <property type="match status" value="1"/>
</dbReference>
<dbReference type="Pfam" id="PF00270">
    <property type="entry name" value="DEAD"/>
    <property type="match status" value="1"/>
</dbReference>
<dbReference type="Pfam" id="PF00271">
    <property type="entry name" value="Helicase_C"/>
    <property type="match status" value="1"/>
</dbReference>
<dbReference type="SMART" id="SM00487">
    <property type="entry name" value="DEXDc"/>
    <property type="match status" value="1"/>
</dbReference>
<dbReference type="SMART" id="SM00490">
    <property type="entry name" value="HELICc"/>
    <property type="match status" value="1"/>
</dbReference>
<dbReference type="SUPFAM" id="SSF52540">
    <property type="entry name" value="P-loop containing nucleoside triphosphate hydrolases"/>
    <property type="match status" value="1"/>
</dbReference>
<dbReference type="PROSITE" id="PS00039">
    <property type="entry name" value="DEAD_ATP_HELICASE"/>
    <property type="match status" value="1"/>
</dbReference>
<dbReference type="PROSITE" id="PS51192">
    <property type="entry name" value="HELICASE_ATP_BIND_1"/>
    <property type="match status" value="1"/>
</dbReference>
<dbReference type="PROSITE" id="PS51194">
    <property type="entry name" value="HELICASE_CTER"/>
    <property type="match status" value="1"/>
</dbReference>
<dbReference type="PROSITE" id="PS51195">
    <property type="entry name" value="Q_MOTIF"/>
    <property type="match status" value="1"/>
</dbReference>
<accession>A7TGU7</accession>
<organism>
    <name type="scientific">Vanderwaltozyma polyspora (strain ATCC 22028 / DSM 70294 / BCRC 21397 / CBS 2163 / NBRC 10782 / NRRL Y-8283 / UCD 57-17)</name>
    <name type="common">Kluyveromyces polysporus</name>
    <dbReference type="NCBI Taxonomy" id="436907"/>
    <lineage>
        <taxon>Eukaryota</taxon>
        <taxon>Fungi</taxon>
        <taxon>Dikarya</taxon>
        <taxon>Ascomycota</taxon>
        <taxon>Saccharomycotina</taxon>
        <taxon>Saccharomycetes</taxon>
        <taxon>Saccharomycetales</taxon>
        <taxon>Saccharomycetaceae</taxon>
        <taxon>Vanderwaltozyma</taxon>
    </lineage>
</organism>
<reference key="1">
    <citation type="journal article" date="2007" name="Proc. Natl. Acad. Sci. U.S.A.">
        <title>Independent sorting-out of thousands of duplicated gene pairs in two yeast species descended from a whole-genome duplication.</title>
        <authorList>
            <person name="Scannell D.R."/>
            <person name="Frank A.C."/>
            <person name="Conant G.C."/>
            <person name="Byrne K.P."/>
            <person name="Woolfit M."/>
            <person name="Wolfe K.H."/>
        </authorList>
    </citation>
    <scope>NUCLEOTIDE SEQUENCE [LARGE SCALE GENOMIC DNA]</scope>
    <source>
        <strain>ATCC 22028 / DSM 70294 / BCRC 21397 / CBS 2163 / NBRC 10782 / NRRL Y-8283 / UCD 57-17</strain>
    </source>
</reference>
<protein>
    <recommendedName>
        <fullName>ATP-dependent RNA helicase DHH1</fullName>
        <ecNumber>3.6.4.13</ecNumber>
    </recommendedName>
</protein>
<evidence type="ECO:0000250" key="1"/>
<evidence type="ECO:0000255" key="2">
    <source>
        <dbReference type="PROSITE-ProRule" id="PRU00541"/>
    </source>
</evidence>
<evidence type="ECO:0000255" key="3">
    <source>
        <dbReference type="PROSITE-ProRule" id="PRU00542"/>
    </source>
</evidence>
<evidence type="ECO:0000256" key="4">
    <source>
        <dbReference type="SAM" id="MobiDB-lite"/>
    </source>
</evidence>
<evidence type="ECO:0000305" key="5"/>
<sequence length="484" mass="55114">MSTQIEDQDWKSKLNIPKKDTRPQTEDVLSTKGNTFEDFYLKRELLMGIFEAGFEKPSPIQEESIPVALAGRDILARAKNGTGKTAAFVIPTLEKVKSKHNKIQALIMVPTRELALQTSQVVRTLGKHCGISCMVTTGGTNLRDDILRLNETVHILVGTPGRVLDLASRKVADLSECNLFIMDEADKMLSRDFKSIIEQILVFLPKNHQSLLFSATFPLSVKEFMVNHLHKPYEINLMDELTLKGITQYYAFVEEKQKLHCLNTLFSKLQINQAIIFCNSTNRVELLAKKITDLGYSCYYSHARMKQQERNRVFHEFRQGKVRTLVCSDLLTRGIDIQAVNVVINFDFPKTAETYLHRIGRSGRFGHLGLAINLINWNDRFNLYKIEQELGTEIQAIPATIDKSLYVANDNSAVPVPFPIEQSHVQPSMQQQHMPLPPQQPIPNQQFGGMPQQYSPQQQQYQQYPPQGMAMPPQGIQMQQQPQF</sequence>
<proteinExistence type="inferred from homology"/>